<evidence type="ECO:0000255" key="1">
    <source>
        <dbReference type="HAMAP-Rule" id="MF_00048"/>
    </source>
</evidence>
<accession>Q8XUC6</accession>
<keyword id="KW-1185">Reference proteome</keyword>
<name>Y3265_RALN1</name>
<proteinExistence type="inferred from homology"/>
<reference key="1">
    <citation type="journal article" date="2002" name="Nature">
        <title>Genome sequence of the plant pathogen Ralstonia solanacearum.</title>
        <authorList>
            <person name="Salanoubat M."/>
            <person name="Genin S."/>
            <person name="Artiguenave F."/>
            <person name="Gouzy J."/>
            <person name="Mangenot S."/>
            <person name="Arlat M."/>
            <person name="Billault A."/>
            <person name="Brottier P."/>
            <person name="Camus J.-C."/>
            <person name="Cattolico L."/>
            <person name="Chandler M."/>
            <person name="Choisne N."/>
            <person name="Claudel-Renard C."/>
            <person name="Cunnac S."/>
            <person name="Demange N."/>
            <person name="Gaspin C."/>
            <person name="Lavie M."/>
            <person name="Moisan A."/>
            <person name="Robert C."/>
            <person name="Saurin W."/>
            <person name="Schiex T."/>
            <person name="Siguier P."/>
            <person name="Thebault P."/>
            <person name="Whalen M."/>
            <person name="Wincker P."/>
            <person name="Levy M."/>
            <person name="Weissenbach J."/>
            <person name="Boucher C.A."/>
        </authorList>
    </citation>
    <scope>NUCLEOTIDE SEQUENCE [LARGE SCALE GENOMIC DNA]</scope>
    <source>
        <strain>ATCC BAA-1114 / GMI1000</strain>
    </source>
</reference>
<protein>
    <recommendedName>
        <fullName evidence="1">UPF0102 protein RSc3265</fullName>
    </recommendedName>
</protein>
<comment type="similarity">
    <text evidence="1">Belongs to the UPF0102 family.</text>
</comment>
<feature type="chain" id="PRO_0000167373" description="UPF0102 protein RSc3265">
    <location>
        <begin position="1"/>
        <end position="130"/>
    </location>
</feature>
<sequence length="130" mass="13873">MHAPQPAPSPPGAAATGEAAEDRALRYLQARGLSVIARNYRCKTGEIDLVMRDVAGTLVFVEVRARVARSAQRFGGAAASVTPAKQRRLIAAAEDFLAGHPGEVPACRFDVIAIDGTRIEWMRDAFGVEA</sequence>
<dbReference type="EMBL" id="AL646052">
    <property type="protein sequence ID" value="CAD17053.1"/>
    <property type="molecule type" value="Genomic_DNA"/>
</dbReference>
<dbReference type="RefSeq" id="WP_011003150.1">
    <property type="nucleotide sequence ID" value="NC_003295.1"/>
</dbReference>
<dbReference type="SMR" id="Q8XUC6"/>
<dbReference type="STRING" id="267608.RSc3265"/>
<dbReference type="EnsemblBacteria" id="CAD17053">
    <property type="protein sequence ID" value="CAD17053"/>
    <property type="gene ID" value="RSc3265"/>
</dbReference>
<dbReference type="KEGG" id="rso:RSc3265"/>
<dbReference type="eggNOG" id="COG0792">
    <property type="taxonomic scope" value="Bacteria"/>
</dbReference>
<dbReference type="HOGENOM" id="CLU_115353_1_0_4"/>
<dbReference type="Proteomes" id="UP000001436">
    <property type="component" value="Chromosome"/>
</dbReference>
<dbReference type="GO" id="GO:0003676">
    <property type="term" value="F:nucleic acid binding"/>
    <property type="evidence" value="ECO:0007669"/>
    <property type="project" value="InterPro"/>
</dbReference>
<dbReference type="Gene3D" id="3.40.1350.10">
    <property type="match status" value="1"/>
</dbReference>
<dbReference type="HAMAP" id="MF_00048">
    <property type="entry name" value="UPF0102"/>
    <property type="match status" value="1"/>
</dbReference>
<dbReference type="InterPro" id="IPR011335">
    <property type="entry name" value="Restrct_endonuc-II-like"/>
</dbReference>
<dbReference type="InterPro" id="IPR011856">
    <property type="entry name" value="tRNA_endonuc-like_dom_sf"/>
</dbReference>
<dbReference type="InterPro" id="IPR003509">
    <property type="entry name" value="UPF0102_YraN-like"/>
</dbReference>
<dbReference type="NCBIfam" id="NF009150">
    <property type="entry name" value="PRK12497.1-3"/>
    <property type="match status" value="1"/>
</dbReference>
<dbReference type="NCBIfam" id="TIGR00252">
    <property type="entry name" value="YraN family protein"/>
    <property type="match status" value="1"/>
</dbReference>
<dbReference type="PANTHER" id="PTHR34039">
    <property type="entry name" value="UPF0102 PROTEIN YRAN"/>
    <property type="match status" value="1"/>
</dbReference>
<dbReference type="PANTHER" id="PTHR34039:SF1">
    <property type="entry name" value="UPF0102 PROTEIN YRAN"/>
    <property type="match status" value="1"/>
</dbReference>
<dbReference type="Pfam" id="PF02021">
    <property type="entry name" value="UPF0102"/>
    <property type="match status" value="1"/>
</dbReference>
<dbReference type="SUPFAM" id="SSF52980">
    <property type="entry name" value="Restriction endonuclease-like"/>
    <property type="match status" value="1"/>
</dbReference>
<gene>
    <name type="ordered locus">RSc3265</name>
    <name type="ORF">RS02494</name>
</gene>
<organism>
    <name type="scientific">Ralstonia nicotianae (strain ATCC BAA-1114 / GMI1000)</name>
    <name type="common">Ralstonia solanacearum</name>
    <dbReference type="NCBI Taxonomy" id="267608"/>
    <lineage>
        <taxon>Bacteria</taxon>
        <taxon>Pseudomonadati</taxon>
        <taxon>Pseudomonadota</taxon>
        <taxon>Betaproteobacteria</taxon>
        <taxon>Burkholderiales</taxon>
        <taxon>Burkholderiaceae</taxon>
        <taxon>Ralstonia</taxon>
        <taxon>Ralstonia solanacearum species complex</taxon>
    </lineage>
</organism>